<feature type="chain" id="PRO_1000073748" description="Ribosome-binding factor A">
    <location>
        <begin position="1"/>
        <end position="138"/>
    </location>
</feature>
<feature type="region of interest" description="Disordered" evidence="2">
    <location>
        <begin position="117"/>
        <end position="138"/>
    </location>
</feature>
<gene>
    <name evidence="1" type="primary">rbfA</name>
    <name type="ordered locus">AM1_3081</name>
</gene>
<keyword id="KW-0963">Cytoplasm</keyword>
<keyword id="KW-1185">Reference proteome</keyword>
<keyword id="KW-0690">Ribosome biogenesis</keyword>
<reference key="1">
    <citation type="journal article" date="2008" name="Proc. Natl. Acad. Sci. U.S.A.">
        <title>Niche adaptation and genome expansion in the chlorophyll d-producing cyanobacterium Acaryochloris marina.</title>
        <authorList>
            <person name="Swingley W.D."/>
            <person name="Chen M."/>
            <person name="Cheung P.C."/>
            <person name="Conrad A.L."/>
            <person name="Dejesa L.C."/>
            <person name="Hao J."/>
            <person name="Honchak B.M."/>
            <person name="Karbach L.E."/>
            <person name="Kurdoglu A."/>
            <person name="Lahiri S."/>
            <person name="Mastrian S.D."/>
            <person name="Miyashita H."/>
            <person name="Page L."/>
            <person name="Ramakrishna P."/>
            <person name="Satoh S."/>
            <person name="Sattley W.M."/>
            <person name="Shimada Y."/>
            <person name="Taylor H.L."/>
            <person name="Tomo T."/>
            <person name="Tsuchiya T."/>
            <person name="Wang Z.T."/>
            <person name="Raymond J."/>
            <person name="Mimuro M."/>
            <person name="Blankenship R.E."/>
            <person name="Touchman J.W."/>
        </authorList>
    </citation>
    <scope>NUCLEOTIDE SEQUENCE [LARGE SCALE GENOMIC DNA]</scope>
    <source>
        <strain>MBIC 11017</strain>
    </source>
</reference>
<evidence type="ECO:0000255" key="1">
    <source>
        <dbReference type="HAMAP-Rule" id="MF_00003"/>
    </source>
</evidence>
<evidence type="ECO:0000256" key="2">
    <source>
        <dbReference type="SAM" id="MobiDB-lite"/>
    </source>
</evidence>
<name>RBFA_ACAM1</name>
<protein>
    <recommendedName>
        <fullName evidence="1">Ribosome-binding factor A</fullName>
    </recommendedName>
</protein>
<dbReference type="EMBL" id="CP000828">
    <property type="protein sequence ID" value="ABW28077.1"/>
    <property type="molecule type" value="Genomic_DNA"/>
</dbReference>
<dbReference type="RefSeq" id="WP_012163507.1">
    <property type="nucleotide sequence ID" value="NC_009925.1"/>
</dbReference>
<dbReference type="SMR" id="B0CDK8"/>
<dbReference type="STRING" id="329726.AM1_3081"/>
<dbReference type="KEGG" id="amr:AM1_3081"/>
<dbReference type="eggNOG" id="COG0858">
    <property type="taxonomic scope" value="Bacteria"/>
</dbReference>
<dbReference type="HOGENOM" id="CLU_089475_2_1_3"/>
<dbReference type="OrthoDB" id="307788at2"/>
<dbReference type="Proteomes" id="UP000000268">
    <property type="component" value="Chromosome"/>
</dbReference>
<dbReference type="GO" id="GO:0005829">
    <property type="term" value="C:cytosol"/>
    <property type="evidence" value="ECO:0007669"/>
    <property type="project" value="TreeGrafter"/>
</dbReference>
<dbReference type="GO" id="GO:0043024">
    <property type="term" value="F:ribosomal small subunit binding"/>
    <property type="evidence" value="ECO:0007669"/>
    <property type="project" value="TreeGrafter"/>
</dbReference>
<dbReference type="GO" id="GO:0030490">
    <property type="term" value="P:maturation of SSU-rRNA"/>
    <property type="evidence" value="ECO:0007669"/>
    <property type="project" value="UniProtKB-UniRule"/>
</dbReference>
<dbReference type="Gene3D" id="3.30.300.20">
    <property type="match status" value="1"/>
</dbReference>
<dbReference type="HAMAP" id="MF_00003">
    <property type="entry name" value="RbfA"/>
    <property type="match status" value="1"/>
</dbReference>
<dbReference type="InterPro" id="IPR015946">
    <property type="entry name" value="KH_dom-like_a/b"/>
</dbReference>
<dbReference type="InterPro" id="IPR000238">
    <property type="entry name" value="RbfA"/>
</dbReference>
<dbReference type="InterPro" id="IPR023799">
    <property type="entry name" value="RbfA_dom_sf"/>
</dbReference>
<dbReference type="InterPro" id="IPR020053">
    <property type="entry name" value="Ribosome-bd_factorA_CS"/>
</dbReference>
<dbReference type="NCBIfam" id="TIGR00082">
    <property type="entry name" value="rbfA"/>
    <property type="match status" value="1"/>
</dbReference>
<dbReference type="PANTHER" id="PTHR33515">
    <property type="entry name" value="RIBOSOME-BINDING FACTOR A, CHLOROPLASTIC-RELATED"/>
    <property type="match status" value="1"/>
</dbReference>
<dbReference type="PANTHER" id="PTHR33515:SF1">
    <property type="entry name" value="RIBOSOME-BINDING FACTOR A, CHLOROPLASTIC-RELATED"/>
    <property type="match status" value="1"/>
</dbReference>
<dbReference type="Pfam" id="PF02033">
    <property type="entry name" value="RBFA"/>
    <property type="match status" value="1"/>
</dbReference>
<dbReference type="SUPFAM" id="SSF89919">
    <property type="entry name" value="Ribosome-binding factor A, RbfA"/>
    <property type="match status" value="1"/>
</dbReference>
<dbReference type="PROSITE" id="PS01319">
    <property type="entry name" value="RBFA"/>
    <property type="match status" value="1"/>
</dbReference>
<proteinExistence type="inferred from homology"/>
<sequence>MATGRRVSRVAELIKREVSQMLLHSIKDDRVGSGMISVTAVDLSGDLQHAKIFVSIYGTDEARAETMAGLESATGYVRKQLGHRIHLRRTPEVIFCEDRSFEEGNQVLSLLHKLDHERQNKPAASTEKPPVGSLDADL</sequence>
<accession>B0CDK8</accession>
<organism>
    <name type="scientific">Acaryochloris marina (strain MBIC 11017)</name>
    <dbReference type="NCBI Taxonomy" id="329726"/>
    <lineage>
        <taxon>Bacteria</taxon>
        <taxon>Bacillati</taxon>
        <taxon>Cyanobacteriota</taxon>
        <taxon>Cyanophyceae</taxon>
        <taxon>Acaryochloridales</taxon>
        <taxon>Acaryochloridaceae</taxon>
        <taxon>Acaryochloris</taxon>
    </lineage>
</organism>
<comment type="function">
    <text evidence="1">One of several proteins that assist in the late maturation steps of the functional core of the 30S ribosomal subunit. Associates with free 30S ribosomal subunits (but not with 30S subunits that are part of 70S ribosomes or polysomes). Required for efficient processing of 16S rRNA. May interact with the 5'-terminal helix region of 16S rRNA.</text>
</comment>
<comment type="subunit">
    <text evidence="1">Monomer. Binds 30S ribosomal subunits, but not 50S ribosomal subunits or 70S ribosomes.</text>
</comment>
<comment type="subcellular location">
    <subcellularLocation>
        <location evidence="1">Cytoplasm</location>
    </subcellularLocation>
</comment>
<comment type="similarity">
    <text evidence="1">Belongs to the RbfA family.</text>
</comment>